<comment type="catalytic activity">
    <reaction evidence="1">
        <text>sulfate + ATP + H(+) = adenosine 5'-phosphosulfate + diphosphate</text>
        <dbReference type="Rhea" id="RHEA:18133"/>
        <dbReference type="ChEBI" id="CHEBI:15378"/>
        <dbReference type="ChEBI" id="CHEBI:16189"/>
        <dbReference type="ChEBI" id="CHEBI:30616"/>
        <dbReference type="ChEBI" id="CHEBI:33019"/>
        <dbReference type="ChEBI" id="CHEBI:58243"/>
        <dbReference type="EC" id="2.7.7.4"/>
    </reaction>
</comment>
<comment type="pathway">
    <text evidence="1">Sulfur metabolism; hydrogen sulfide biosynthesis; sulfite from sulfate: step 1/3.</text>
</comment>
<comment type="similarity">
    <text evidence="1">Belongs to the sulfate adenylyltransferase family.</text>
</comment>
<name>SAT_BACP2</name>
<accession>A8FD24</accession>
<protein>
    <recommendedName>
        <fullName evidence="1">Sulfate adenylyltransferase</fullName>
        <ecNumber evidence="1">2.7.7.4</ecNumber>
    </recommendedName>
    <alternativeName>
        <fullName evidence="1">ATP-sulfurylase</fullName>
    </alternativeName>
    <alternativeName>
        <fullName evidence="1">Sulfate adenylate transferase</fullName>
        <shortName evidence="1">SAT</shortName>
    </alternativeName>
</protein>
<proteinExistence type="inferred from homology"/>
<gene>
    <name evidence="1" type="primary">sat</name>
    <name type="ordered locus">BPUM_1458</name>
</gene>
<dbReference type="EC" id="2.7.7.4" evidence="1"/>
<dbReference type="EMBL" id="CP000813">
    <property type="protein sequence ID" value="ABV62141.1"/>
    <property type="molecule type" value="Genomic_DNA"/>
</dbReference>
<dbReference type="RefSeq" id="WP_012009904.1">
    <property type="nucleotide sequence ID" value="NZ_VEHA01000002.1"/>
</dbReference>
<dbReference type="SMR" id="A8FD24"/>
<dbReference type="STRING" id="315750.BPUM_1458"/>
<dbReference type="GeneID" id="5620721"/>
<dbReference type="KEGG" id="bpu:BPUM_1458"/>
<dbReference type="eggNOG" id="COG2046">
    <property type="taxonomic scope" value="Bacteria"/>
</dbReference>
<dbReference type="HOGENOM" id="CLU_022950_1_1_9"/>
<dbReference type="OrthoDB" id="9804504at2"/>
<dbReference type="UniPathway" id="UPA00140">
    <property type="reaction ID" value="UER00204"/>
</dbReference>
<dbReference type="Proteomes" id="UP000001355">
    <property type="component" value="Chromosome"/>
</dbReference>
<dbReference type="GO" id="GO:0005524">
    <property type="term" value="F:ATP binding"/>
    <property type="evidence" value="ECO:0007669"/>
    <property type="project" value="UniProtKB-KW"/>
</dbReference>
<dbReference type="GO" id="GO:0004781">
    <property type="term" value="F:sulfate adenylyltransferase (ATP) activity"/>
    <property type="evidence" value="ECO:0007669"/>
    <property type="project" value="UniProtKB-UniRule"/>
</dbReference>
<dbReference type="GO" id="GO:0070814">
    <property type="term" value="P:hydrogen sulfide biosynthetic process"/>
    <property type="evidence" value="ECO:0007669"/>
    <property type="project" value="UniProtKB-UniRule"/>
</dbReference>
<dbReference type="GO" id="GO:0000103">
    <property type="term" value="P:sulfate assimilation"/>
    <property type="evidence" value="ECO:0007669"/>
    <property type="project" value="UniProtKB-UniRule"/>
</dbReference>
<dbReference type="CDD" id="cd00517">
    <property type="entry name" value="ATPS"/>
    <property type="match status" value="1"/>
</dbReference>
<dbReference type="Gene3D" id="3.40.50.620">
    <property type="entry name" value="HUPs"/>
    <property type="match status" value="1"/>
</dbReference>
<dbReference type="Gene3D" id="3.10.400.10">
    <property type="entry name" value="Sulfate adenylyltransferase"/>
    <property type="match status" value="1"/>
</dbReference>
<dbReference type="HAMAP" id="MF_00066">
    <property type="entry name" value="Sulf_adenylyltr"/>
    <property type="match status" value="1"/>
</dbReference>
<dbReference type="InterPro" id="IPR025980">
    <property type="entry name" value="ATP-Sase_PUA-like_dom"/>
</dbReference>
<dbReference type="InterPro" id="IPR015947">
    <property type="entry name" value="PUA-like_sf"/>
</dbReference>
<dbReference type="InterPro" id="IPR014729">
    <property type="entry name" value="Rossmann-like_a/b/a_fold"/>
</dbReference>
<dbReference type="InterPro" id="IPR020792">
    <property type="entry name" value="SO4_adenylyltransferase_pro"/>
</dbReference>
<dbReference type="InterPro" id="IPR024951">
    <property type="entry name" value="Sulfurylase_cat_dom"/>
</dbReference>
<dbReference type="InterPro" id="IPR002650">
    <property type="entry name" value="Sulphate_adenylyltransferase"/>
</dbReference>
<dbReference type="NCBIfam" id="NF003166">
    <property type="entry name" value="PRK04149.1"/>
    <property type="match status" value="1"/>
</dbReference>
<dbReference type="NCBIfam" id="TIGR00339">
    <property type="entry name" value="sopT"/>
    <property type="match status" value="1"/>
</dbReference>
<dbReference type="PANTHER" id="PTHR43509">
    <property type="match status" value="1"/>
</dbReference>
<dbReference type="PANTHER" id="PTHR43509:SF1">
    <property type="entry name" value="SULFATE ADENYLYLTRANSFERASE"/>
    <property type="match status" value="1"/>
</dbReference>
<dbReference type="Pfam" id="PF01747">
    <property type="entry name" value="ATP-sulfurylase"/>
    <property type="match status" value="1"/>
</dbReference>
<dbReference type="Pfam" id="PF14306">
    <property type="entry name" value="PUA_2"/>
    <property type="match status" value="1"/>
</dbReference>
<dbReference type="SUPFAM" id="SSF52374">
    <property type="entry name" value="Nucleotidylyl transferase"/>
    <property type="match status" value="1"/>
</dbReference>
<dbReference type="SUPFAM" id="SSF88697">
    <property type="entry name" value="PUA domain-like"/>
    <property type="match status" value="1"/>
</dbReference>
<keyword id="KW-0067">ATP-binding</keyword>
<keyword id="KW-0547">Nucleotide-binding</keyword>
<keyword id="KW-0548">Nucleotidyltransferase</keyword>
<keyword id="KW-0808">Transferase</keyword>
<feature type="chain" id="PRO_0000340614" description="Sulfate adenylyltransferase">
    <location>
        <begin position="1"/>
        <end position="378"/>
    </location>
</feature>
<sequence length="378" mass="42548">MSLTPHGGVLINRVNEEYDLSTVAKEIELDAISFADLELIAIGGYSPIEGFLTKADYEAVVSSMRLASGVVWSLPITLPVTKEKAAEIHQGDIVRLSYNGTVYGVIEVEDQYTPDKEKEAVNVYKTDDRNHPGVKKLFERGDTYIGGKITLTKRSEKPFPQFTYEPEETRRHFKENGWKTIVGFQTRNPVHRAHEYIQKTALETVDGLFLNPLVGETKSDDIPADVRMKSYQVLLNGYYPKDRVFLGVFPAAMRYAGPKEAIFHALVRKNYGCTHFIVGRDHAGVGDYYGTYEAQELFEQFTSEEIGITPLKFEHSFYCNTCEAMATPKTCPHDKSEHVILSGTKVRTMLRNGELPPSTFSRKEVIETLIEGLKTTVS</sequence>
<evidence type="ECO:0000255" key="1">
    <source>
        <dbReference type="HAMAP-Rule" id="MF_00066"/>
    </source>
</evidence>
<organism>
    <name type="scientific">Bacillus pumilus (strain SAFR-032)</name>
    <dbReference type="NCBI Taxonomy" id="315750"/>
    <lineage>
        <taxon>Bacteria</taxon>
        <taxon>Bacillati</taxon>
        <taxon>Bacillota</taxon>
        <taxon>Bacilli</taxon>
        <taxon>Bacillales</taxon>
        <taxon>Bacillaceae</taxon>
        <taxon>Bacillus</taxon>
    </lineage>
</organism>
<reference key="1">
    <citation type="journal article" date="2007" name="PLoS ONE">
        <title>Paradoxical DNA repair and peroxide resistance gene conservation in Bacillus pumilus SAFR-032.</title>
        <authorList>
            <person name="Gioia J."/>
            <person name="Yerrapragada S."/>
            <person name="Qin X."/>
            <person name="Jiang H."/>
            <person name="Igboeli O.C."/>
            <person name="Muzny D."/>
            <person name="Dugan-Rocha S."/>
            <person name="Ding Y."/>
            <person name="Hawes A."/>
            <person name="Liu W."/>
            <person name="Perez L."/>
            <person name="Kovar C."/>
            <person name="Dinh H."/>
            <person name="Lee S."/>
            <person name="Nazareth L."/>
            <person name="Blyth P."/>
            <person name="Holder M."/>
            <person name="Buhay C."/>
            <person name="Tirumalai M.R."/>
            <person name="Liu Y."/>
            <person name="Dasgupta I."/>
            <person name="Bokhetache L."/>
            <person name="Fujita M."/>
            <person name="Karouia F."/>
            <person name="Eswara Moorthy P."/>
            <person name="Siefert J."/>
            <person name="Uzman A."/>
            <person name="Buzumbo P."/>
            <person name="Verma A."/>
            <person name="Zwiya H."/>
            <person name="McWilliams B.D."/>
            <person name="Olowu A."/>
            <person name="Clinkenbeard K.D."/>
            <person name="Newcombe D."/>
            <person name="Golebiewski L."/>
            <person name="Petrosino J.F."/>
            <person name="Nicholson W.L."/>
            <person name="Fox G.E."/>
            <person name="Venkateswaran K."/>
            <person name="Highlander S.K."/>
            <person name="Weinstock G.M."/>
        </authorList>
    </citation>
    <scope>NUCLEOTIDE SEQUENCE [LARGE SCALE GENOMIC DNA]</scope>
    <source>
        <strain>SAFR-032</strain>
    </source>
</reference>